<name>YCAD_SALSV</name>
<keyword id="KW-0997">Cell inner membrane</keyword>
<keyword id="KW-1003">Cell membrane</keyword>
<keyword id="KW-0472">Membrane</keyword>
<keyword id="KW-0812">Transmembrane</keyword>
<keyword id="KW-1133">Transmembrane helix</keyword>
<keyword id="KW-0813">Transport</keyword>
<gene>
    <name evidence="1" type="primary">ycaD</name>
    <name type="ordered locus">SeSA_A1081</name>
</gene>
<proteinExistence type="inferred from homology"/>
<comment type="subcellular location">
    <subcellularLocation>
        <location evidence="1">Cell inner membrane</location>
        <topology evidence="1">Multi-pass membrane protein</topology>
    </subcellularLocation>
</comment>
<comment type="similarity">
    <text evidence="1">Belongs to the major facilitator superfamily. YcaD (TC 2.A.1.26) family.</text>
</comment>
<dbReference type="EMBL" id="CP001127">
    <property type="protein sequence ID" value="ACF91678.1"/>
    <property type="molecule type" value="Genomic_DNA"/>
</dbReference>
<dbReference type="RefSeq" id="WP_000109271.1">
    <property type="nucleotide sequence ID" value="NC_011094.1"/>
</dbReference>
<dbReference type="SMR" id="B4TRS9"/>
<dbReference type="KEGG" id="sew:SeSA_A1081"/>
<dbReference type="HOGENOM" id="CLU_035018_1_2_6"/>
<dbReference type="Proteomes" id="UP000001865">
    <property type="component" value="Chromosome"/>
</dbReference>
<dbReference type="GO" id="GO:0005886">
    <property type="term" value="C:plasma membrane"/>
    <property type="evidence" value="ECO:0007669"/>
    <property type="project" value="UniProtKB-SubCell"/>
</dbReference>
<dbReference type="GO" id="GO:0022857">
    <property type="term" value="F:transmembrane transporter activity"/>
    <property type="evidence" value="ECO:0007669"/>
    <property type="project" value="UniProtKB-UniRule"/>
</dbReference>
<dbReference type="CDD" id="cd17477">
    <property type="entry name" value="MFS_YcaD_like"/>
    <property type="match status" value="1"/>
</dbReference>
<dbReference type="FunFam" id="1.20.1250.20:FF:000041">
    <property type="entry name" value="Uncharacterized MFS-type transporter YcaD"/>
    <property type="match status" value="1"/>
</dbReference>
<dbReference type="FunFam" id="1.20.1250.20:FF:000066">
    <property type="entry name" value="Uncharacterized MFS-type transporter YcaD"/>
    <property type="match status" value="1"/>
</dbReference>
<dbReference type="Gene3D" id="1.20.1250.20">
    <property type="entry name" value="MFS general substrate transporter like domains"/>
    <property type="match status" value="2"/>
</dbReference>
<dbReference type="HAMAP" id="MF_01149">
    <property type="entry name" value="MFS_YcaD"/>
    <property type="match status" value="1"/>
</dbReference>
<dbReference type="InterPro" id="IPR011701">
    <property type="entry name" value="MFS"/>
</dbReference>
<dbReference type="InterPro" id="IPR020846">
    <property type="entry name" value="MFS_dom"/>
</dbReference>
<dbReference type="InterPro" id="IPR036259">
    <property type="entry name" value="MFS_trans_sf"/>
</dbReference>
<dbReference type="InterPro" id="IPR023745">
    <property type="entry name" value="MFS_YcaD"/>
</dbReference>
<dbReference type="InterPro" id="IPR047200">
    <property type="entry name" value="MFS_YcaD-like"/>
</dbReference>
<dbReference type="NCBIfam" id="NF002962">
    <property type="entry name" value="PRK03633.1"/>
    <property type="match status" value="1"/>
</dbReference>
<dbReference type="PANTHER" id="PTHR23521">
    <property type="entry name" value="TRANSPORTER MFS SUPERFAMILY"/>
    <property type="match status" value="1"/>
</dbReference>
<dbReference type="PANTHER" id="PTHR23521:SF2">
    <property type="entry name" value="TRANSPORTER MFS SUPERFAMILY"/>
    <property type="match status" value="1"/>
</dbReference>
<dbReference type="Pfam" id="PF07690">
    <property type="entry name" value="MFS_1"/>
    <property type="match status" value="1"/>
</dbReference>
<dbReference type="SUPFAM" id="SSF103473">
    <property type="entry name" value="MFS general substrate transporter"/>
    <property type="match status" value="1"/>
</dbReference>
<dbReference type="PROSITE" id="PS50850">
    <property type="entry name" value="MFS"/>
    <property type="match status" value="1"/>
</dbReference>
<reference key="1">
    <citation type="journal article" date="2011" name="J. Bacteriol.">
        <title>Comparative genomics of 28 Salmonella enterica isolates: evidence for CRISPR-mediated adaptive sublineage evolution.</title>
        <authorList>
            <person name="Fricke W.F."/>
            <person name="Mammel M.K."/>
            <person name="McDermott P.F."/>
            <person name="Tartera C."/>
            <person name="White D.G."/>
            <person name="Leclerc J.E."/>
            <person name="Ravel J."/>
            <person name="Cebula T.A."/>
        </authorList>
    </citation>
    <scope>NUCLEOTIDE SEQUENCE [LARGE SCALE GENOMIC DNA]</scope>
    <source>
        <strain>CVM19633</strain>
    </source>
</reference>
<organism>
    <name type="scientific">Salmonella schwarzengrund (strain CVM19633)</name>
    <dbReference type="NCBI Taxonomy" id="439843"/>
    <lineage>
        <taxon>Bacteria</taxon>
        <taxon>Pseudomonadati</taxon>
        <taxon>Pseudomonadota</taxon>
        <taxon>Gammaproteobacteria</taxon>
        <taxon>Enterobacterales</taxon>
        <taxon>Enterobacteriaceae</taxon>
        <taxon>Salmonella</taxon>
    </lineage>
</organism>
<accession>B4TRS9</accession>
<feature type="chain" id="PRO_1000137499" description="Uncharacterized MFS-type transporter YcaD">
    <location>
        <begin position="1"/>
        <end position="382"/>
    </location>
</feature>
<feature type="transmembrane region" description="Helical" evidence="1">
    <location>
        <begin position="8"/>
        <end position="28"/>
    </location>
</feature>
<feature type="transmembrane region" description="Helical" evidence="1">
    <location>
        <begin position="45"/>
        <end position="65"/>
    </location>
</feature>
<feature type="transmembrane region" description="Helical" evidence="1">
    <location>
        <begin position="75"/>
        <end position="95"/>
    </location>
</feature>
<feature type="transmembrane region" description="Helical" evidence="1">
    <location>
        <begin position="102"/>
        <end position="122"/>
    </location>
</feature>
<feature type="transmembrane region" description="Helical" evidence="1">
    <location>
        <begin position="131"/>
        <end position="151"/>
    </location>
</feature>
<feature type="transmembrane region" description="Helical" evidence="1">
    <location>
        <begin position="157"/>
        <end position="177"/>
    </location>
</feature>
<feature type="transmembrane region" description="Helical" evidence="1">
    <location>
        <begin position="204"/>
        <end position="224"/>
    </location>
</feature>
<feature type="transmembrane region" description="Helical" evidence="1">
    <location>
        <begin position="231"/>
        <end position="251"/>
    </location>
</feature>
<feature type="transmembrane region" description="Helical" evidence="1">
    <location>
        <begin position="270"/>
        <end position="290"/>
    </location>
</feature>
<feature type="transmembrane region" description="Helical" evidence="1">
    <location>
        <begin position="291"/>
        <end position="311"/>
    </location>
</feature>
<feature type="transmembrane region" description="Helical" evidence="1">
    <location>
        <begin position="325"/>
        <end position="345"/>
    </location>
</feature>
<feature type="transmembrane region" description="Helical" evidence="1">
    <location>
        <begin position="349"/>
        <end position="369"/>
    </location>
</feature>
<protein>
    <recommendedName>
        <fullName evidence="1">Uncharacterized MFS-type transporter YcaD</fullName>
    </recommendedName>
</protein>
<evidence type="ECO:0000255" key="1">
    <source>
        <dbReference type="HAMAP-Rule" id="MF_01149"/>
    </source>
</evidence>
<sequence length="382" mass="41548">MSTYTRPVMLLLCGLLLLTLAIAVLNTLVPLWLAQANLPTWQVGMVSSSYFTGNLVGTLFTGYLIKRIGFNRSYYLASLIFAAGCVGLGVMVGFWSWMSWRFIAGIGCAMIWVVVESALMCSGTSHNRGRLLAAYMMVYYMGTFLGQLLVSKVSGELLHVLPWVTGMILAGILPLLFTRIVNQQTQARHSSSISAMLKLRQARLGVNGCIISGIVLGSLYGLMPLYLKHQGMANASIGFWMAVLVSAGILGQWPMGRLADKFGRLLVLRVQVFVVILGSIAMLTQAAMAPALFILGAAGFTLYPVAMAWACEKVEHHQLVAMNQALLLSYTVGSLLGPSFAAMLMQNYSDNLLFIMIASVSFIYLLMLLRNAGQTPNPVAHI</sequence>